<dbReference type="EMBL" id="U11809">
    <property type="protein sequence ID" value="AAA76597.1"/>
    <property type="molecule type" value="Genomic_DNA"/>
</dbReference>
<dbReference type="GO" id="GO:0005634">
    <property type="term" value="C:nucleus"/>
    <property type="evidence" value="ECO:0007669"/>
    <property type="project" value="UniProtKB-SubCell"/>
</dbReference>
<dbReference type="GO" id="GO:0048471">
    <property type="term" value="C:perinuclear region of cytoplasm"/>
    <property type="evidence" value="ECO:0007669"/>
    <property type="project" value="UniProtKB-SubCell"/>
</dbReference>
<dbReference type="GO" id="GO:0048511">
    <property type="term" value="P:rhythmic process"/>
    <property type="evidence" value="ECO:0007669"/>
    <property type="project" value="UniProtKB-KW"/>
</dbReference>
<name>PER_ZAPTU</name>
<protein>
    <recommendedName>
        <fullName>Period circadian protein</fullName>
    </recommendedName>
</protein>
<gene>
    <name type="primary">per</name>
</gene>
<proteinExistence type="inferred from homology"/>
<keyword id="KW-0090">Biological rhythms</keyword>
<keyword id="KW-0963">Cytoplasm</keyword>
<keyword id="KW-0539">Nucleus</keyword>
<keyword id="KW-0597">Phosphoprotein</keyword>
<keyword id="KW-0677">Repeat</keyword>
<organism>
    <name type="scientific">Zaprionus tuberculatus</name>
    <name type="common">Vinegar fly</name>
    <dbReference type="NCBI Taxonomy" id="7297"/>
    <lineage>
        <taxon>Eukaryota</taxon>
        <taxon>Metazoa</taxon>
        <taxon>Ecdysozoa</taxon>
        <taxon>Arthropoda</taxon>
        <taxon>Hexapoda</taxon>
        <taxon>Insecta</taxon>
        <taxon>Pterygota</taxon>
        <taxon>Neoptera</taxon>
        <taxon>Endopterygota</taxon>
        <taxon>Diptera</taxon>
        <taxon>Brachycera</taxon>
        <taxon>Muscomorpha</taxon>
        <taxon>Ephydroidea</taxon>
        <taxon>Drosophilidae</taxon>
        <taxon>Zaprionus</taxon>
        <taxon>armatus group</taxon>
        <taxon>tuberculatus subgroup</taxon>
    </lineage>
</organism>
<comment type="function">
    <text evidence="1">Essential for biological clock functions. Determines the period length of circadian and ultradian rhythms; an increase in PER dosage leads to shortened circadian rhythms and a decrease leads to lengthened circadian rhythms. Essential for the circadian rhythmicity of locomotor activity, eclosion behavior, and for the rhythmic component of the male courtship song that originates in the thoracic nervous system. The biological cycle depends on the rhythmic formation and nuclear localization of the TIM-PER complex. Light induces the degradation of TIM, which promotes elimination of PER. Nuclear activity of the heterodimer coordinatively regulates PER and TIM transcription through a negative feedback loop. Behaves as a negative element in circadian transcriptional loop. Does not appear to bind DNA, suggesting indirect transcriptional inhibition (By similarity).</text>
</comment>
<comment type="subunit">
    <text evidence="1">Forms a heterodimer with timeless (TIM); the complex then translocates into the nucleus.</text>
</comment>
<comment type="subcellular location">
    <subcellularLocation>
        <location evidence="1">Nucleus</location>
    </subcellularLocation>
    <subcellularLocation>
        <location evidence="1">Cytoplasm</location>
        <location evidence="1">Perinuclear region</location>
    </subcellularLocation>
    <text evidence="1">Nuclear at specific periods of the day. First accumulates in the perinuclear region about one hour before translocation into the nucleus. Interaction with Tim is required for nuclear localization (By similarity).</text>
</comment>
<comment type="PTM">
    <text evidence="1">Phosphorylated with a circadian rhythmicity, probably by the double-time protein (dbt). Phosphorylation could be implicated in the stability of per monomer and in the formation of heterodimer per-tim (By similarity).</text>
</comment>
<sequence>SKSSTETPPSYNQLNYNENLLRFFNSKPVTAPVELDPPKLESSYVSSAREDARSTLSPVHGFEGSGGSGSSGNFTTGSNVRMSSVTNTSNAGTGTSGGGNSAGGASGGVGAVGVAANAPLVTVTLTESLLN</sequence>
<accession>Q27135</accession>
<feature type="chain" id="PRO_0000162626" description="Period circadian protein">
    <location>
        <begin position="1" status="less than"/>
        <end position="131" status="greater than"/>
    </location>
</feature>
<feature type="region of interest" description="Disordered" evidence="2">
    <location>
        <begin position="29"/>
        <end position="109"/>
    </location>
</feature>
<feature type="compositionally biased region" description="Low complexity" evidence="2">
    <location>
        <begin position="71"/>
        <end position="93"/>
    </location>
</feature>
<feature type="compositionally biased region" description="Gly residues" evidence="2">
    <location>
        <begin position="94"/>
        <end position="109"/>
    </location>
</feature>
<feature type="non-terminal residue">
    <location>
        <position position="1"/>
    </location>
</feature>
<feature type="non-terminal residue">
    <location>
        <position position="131"/>
    </location>
</feature>
<evidence type="ECO:0000250" key="1"/>
<evidence type="ECO:0000256" key="2">
    <source>
        <dbReference type="SAM" id="MobiDB-lite"/>
    </source>
</evidence>
<reference key="1">
    <citation type="journal article" date="1994" name="Mol. Biol. Evol.">
        <title>Big flies, small repeats: the 'Thr-Gly' region of the period gene in Diptera.</title>
        <authorList>
            <person name="Nielsen J."/>
            <person name="Peixoto A.A."/>
            <person name="Piccin A."/>
            <person name="Costa R."/>
            <person name="Kyriacou C.P."/>
            <person name="Chalmers D."/>
        </authorList>
    </citation>
    <scope>NUCLEOTIDE SEQUENCE [GENOMIC DNA]</scope>
</reference>